<reference key="1">
    <citation type="journal article" date="2000" name="Nucleic Acids Res.">
        <title>Complete genome sequence of the alkaliphilic bacterium Bacillus halodurans and genomic sequence comparison with Bacillus subtilis.</title>
        <authorList>
            <person name="Takami H."/>
            <person name="Nakasone K."/>
            <person name="Takaki Y."/>
            <person name="Maeno G."/>
            <person name="Sasaki R."/>
            <person name="Masui N."/>
            <person name="Fuji F."/>
            <person name="Hirama C."/>
            <person name="Nakamura Y."/>
            <person name="Ogasawara N."/>
            <person name="Kuhara S."/>
            <person name="Horikoshi K."/>
        </authorList>
    </citation>
    <scope>NUCLEOTIDE SEQUENCE [LARGE SCALE GENOMIC DNA]</scope>
    <source>
        <strain>ATCC BAA-125 / DSM 18197 / FERM 7344 / JCM 9153 / C-125</strain>
    </source>
</reference>
<accession>Q9K9D5</accession>
<dbReference type="EC" id="2.5.1.19" evidence="1"/>
<dbReference type="EMBL" id="BA000004">
    <property type="protein sequence ID" value="BAB06432.1"/>
    <property type="molecule type" value="Genomic_DNA"/>
</dbReference>
<dbReference type="PIR" id="A83989">
    <property type="entry name" value="A83989"/>
</dbReference>
<dbReference type="RefSeq" id="WP_010898861.1">
    <property type="nucleotide sequence ID" value="NC_002570.2"/>
</dbReference>
<dbReference type="SMR" id="Q9K9D5"/>
<dbReference type="STRING" id="272558.gene:10728611"/>
<dbReference type="KEGG" id="bha:BH2713"/>
<dbReference type="eggNOG" id="COG0128">
    <property type="taxonomic scope" value="Bacteria"/>
</dbReference>
<dbReference type="HOGENOM" id="CLU_024321_0_0_9"/>
<dbReference type="OrthoDB" id="9809920at2"/>
<dbReference type="UniPathway" id="UPA00053">
    <property type="reaction ID" value="UER00089"/>
</dbReference>
<dbReference type="Proteomes" id="UP000001258">
    <property type="component" value="Chromosome"/>
</dbReference>
<dbReference type="GO" id="GO:0005737">
    <property type="term" value="C:cytoplasm"/>
    <property type="evidence" value="ECO:0007669"/>
    <property type="project" value="UniProtKB-SubCell"/>
</dbReference>
<dbReference type="GO" id="GO:0003866">
    <property type="term" value="F:3-phosphoshikimate 1-carboxyvinyltransferase activity"/>
    <property type="evidence" value="ECO:0007669"/>
    <property type="project" value="UniProtKB-UniRule"/>
</dbReference>
<dbReference type="GO" id="GO:0008652">
    <property type="term" value="P:amino acid biosynthetic process"/>
    <property type="evidence" value="ECO:0007669"/>
    <property type="project" value="UniProtKB-KW"/>
</dbReference>
<dbReference type="GO" id="GO:0009073">
    <property type="term" value="P:aromatic amino acid family biosynthetic process"/>
    <property type="evidence" value="ECO:0007669"/>
    <property type="project" value="UniProtKB-KW"/>
</dbReference>
<dbReference type="GO" id="GO:0009423">
    <property type="term" value="P:chorismate biosynthetic process"/>
    <property type="evidence" value="ECO:0007669"/>
    <property type="project" value="UniProtKB-UniRule"/>
</dbReference>
<dbReference type="CDD" id="cd01556">
    <property type="entry name" value="EPSP_synthase"/>
    <property type="match status" value="1"/>
</dbReference>
<dbReference type="Gene3D" id="3.65.10.10">
    <property type="entry name" value="Enolpyruvate transferase domain"/>
    <property type="match status" value="2"/>
</dbReference>
<dbReference type="HAMAP" id="MF_00210">
    <property type="entry name" value="EPSP_synth"/>
    <property type="match status" value="1"/>
</dbReference>
<dbReference type="InterPro" id="IPR001986">
    <property type="entry name" value="Enolpyruvate_Tfrase_dom"/>
</dbReference>
<dbReference type="InterPro" id="IPR036968">
    <property type="entry name" value="Enolpyruvate_Tfrase_sf"/>
</dbReference>
<dbReference type="InterPro" id="IPR006264">
    <property type="entry name" value="EPSP_synthase"/>
</dbReference>
<dbReference type="InterPro" id="IPR023193">
    <property type="entry name" value="EPSP_synthase_CS"/>
</dbReference>
<dbReference type="InterPro" id="IPR013792">
    <property type="entry name" value="RNA3'P_cycl/enolpyr_Trfase_a/b"/>
</dbReference>
<dbReference type="NCBIfam" id="TIGR01356">
    <property type="entry name" value="aroA"/>
    <property type="match status" value="1"/>
</dbReference>
<dbReference type="PANTHER" id="PTHR21090">
    <property type="entry name" value="AROM/DEHYDROQUINATE SYNTHASE"/>
    <property type="match status" value="1"/>
</dbReference>
<dbReference type="PANTHER" id="PTHR21090:SF5">
    <property type="entry name" value="PENTAFUNCTIONAL AROM POLYPEPTIDE"/>
    <property type="match status" value="1"/>
</dbReference>
<dbReference type="Pfam" id="PF00275">
    <property type="entry name" value="EPSP_synthase"/>
    <property type="match status" value="1"/>
</dbReference>
<dbReference type="PIRSF" id="PIRSF000505">
    <property type="entry name" value="EPSPS"/>
    <property type="match status" value="1"/>
</dbReference>
<dbReference type="SUPFAM" id="SSF55205">
    <property type="entry name" value="EPT/RTPC-like"/>
    <property type="match status" value="1"/>
</dbReference>
<dbReference type="PROSITE" id="PS00885">
    <property type="entry name" value="EPSP_SYNTHASE_2"/>
    <property type="match status" value="1"/>
</dbReference>
<evidence type="ECO:0000255" key="1">
    <source>
        <dbReference type="HAMAP-Rule" id="MF_00210"/>
    </source>
</evidence>
<evidence type="ECO:0000305" key="2"/>
<gene>
    <name evidence="1" type="primary">aroA2</name>
    <name type="ordered locus">BH2713</name>
</gene>
<sequence>MTRFDENARSPWTPLHDVKTVELFPLNQRLDGSITLPGSKSLTNRALIISALANSDSMLTGMLKSDDTYWCIQALKRLGVQINVQGETTSIRGIGGQWKSSSLYIGAAGTLARFLLGALAISRSGNWEIEASQSMSKRPIEPLVGVLRELGATIHYLRREGFYPLSIHGNGLAGGTVRLSGQMSSQYISGLLIAAPYADTPVTITVQGSIVQHAYVFLTLHLMKSFGAQVEYDQQLQTIVVHPTPYTCQDIDLEADASTACYFLALAALTKGRIRLNNLTASTTQPDLHMLTVFEKMGCTVTRGSSFIELEGVSQLKGGFQISMNEMSDQALTLAAIAPFADGPITITDVEHIRYHESDRIAVICEALTRLGIQVDEFEDGLTVYPGTPKPTLHPLSTYDDHRVAMSLSLIGTKVKGLRLNDPGCVAKTCPSYFQLLEQLGIQVHYQ</sequence>
<comment type="function">
    <text evidence="1">Catalyzes the transfer of the enolpyruvyl moiety of phosphoenolpyruvate (PEP) to the 5-hydroxyl of shikimate-3-phosphate (S3P) to produce enolpyruvyl shikimate-3-phosphate and inorganic phosphate.</text>
</comment>
<comment type="catalytic activity">
    <reaction evidence="1">
        <text>3-phosphoshikimate + phosphoenolpyruvate = 5-O-(1-carboxyvinyl)-3-phosphoshikimate + phosphate</text>
        <dbReference type="Rhea" id="RHEA:21256"/>
        <dbReference type="ChEBI" id="CHEBI:43474"/>
        <dbReference type="ChEBI" id="CHEBI:57701"/>
        <dbReference type="ChEBI" id="CHEBI:58702"/>
        <dbReference type="ChEBI" id="CHEBI:145989"/>
        <dbReference type="EC" id="2.5.1.19"/>
    </reaction>
    <physiologicalReaction direction="left-to-right" evidence="1">
        <dbReference type="Rhea" id="RHEA:21257"/>
    </physiologicalReaction>
</comment>
<comment type="pathway">
    <text evidence="1">Metabolic intermediate biosynthesis; chorismate biosynthesis; chorismate from D-erythrose 4-phosphate and phosphoenolpyruvate: step 6/7.</text>
</comment>
<comment type="subunit">
    <text evidence="1">Monomer.</text>
</comment>
<comment type="subcellular location">
    <subcellularLocation>
        <location evidence="1">Cytoplasm</location>
    </subcellularLocation>
</comment>
<comment type="similarity">
    <text evidence="1 2">Belongs to the EPSP synthase family.</text>
</comment>
<protein>
    <recommendedName>
        <fullName evidence="1">3-phosphoshikimate 1-carboxyvinyltransferase 2</fullName>
        <ecNumber evidence="1">2.5.1.19</ecNumber>
    </recommendedName>
    <alternativeName>
        <fullName evidence="1">5-enolpyruvylshikimate-3-phosphate synthase 2</fullName>
        <shortName evidence="1">EPSP synthase 2</shortName>
        <shortName evidence="1">EPSPS 2</shortName>
    </alternativeName>
</protein>
<keyword id="KW-0028">Amino-acid biosynthesis</keyword>
<keyword id="KW-0057">Aromatic amino acid biosynthesis</keyword>
<keyword id="KW-0963">Cytoplasm</keyword>
<keyword id="KW-1185">Reference proteome</keyword>
<keyword id="KW-0808">Transferase</keyword>
<name>AROA2_HALH5</name>
<proteinExistence type="inferred from homology"/>
<feature type="chain" id="PRO_0000088223" description="3-phosphoshikimate 1-carboxyvinyltransferase 2">
    <location>
        <begin position="1"/>
        <end position="447"/>
    </location>
</feature>
<feature type="active site" description="Proton acceptor" evidence="1">
    <location>
        <position position="329"/>
    </location>
</feature>
<feature type="binding site" evidence="1">
    <location>
        <position position="40"/>
    </location>
    <ligand>
        <name>3-phosphoshikimate</name>
        <dbReference type="ChEBI" id="CHEBI:145989"/>
    </ligand>
</feature>
<feature type="binding site" evidence="1">
    <location>
        <position position="40"/>
    </location>
    <ligand>
        <name>phosphoenolpyruvate</name>
        <dbReference type="ChEBI" id="CHEBI:58702"/>
    </ligand>
</feature>
<feature type="binding site" evidence="1">
    <location>
        <position position="41"/>
    </location>
    <ligand>
        <name>3-phosphoshikimate</name>
        <dbReference type="ChEBI" id="CHEBI:145989"/>
    </ligand>
</feature>
<feature type="binding site" evidence="1">
    <location>
        <position position="45"/>
    </location>
    <ligand>
        <name>3-phosphoshikimate</name>
        <dbReference type="ChEBI" id="CHEBI:145989"/>
    </ligand>
</feature>
<feature type="binding site" evidence="1">
    <location>
        <position position="109"/>
    </location>
    <ligand>
        <name>phosphoenolpyruvate</name>
        <dbReference type="ChEBI" id="CHEBI:58702"/>
    </ligand>
</feature>
<feature type="binding site" evidence="1">
    <location>
        <position position="138"/>
    </location>
    <ligand>
        <name>phosphoenolpyruvate</name>
        <dbReference type="ChEBI" id="CHEBI:58702"/>
    </ligand>
</feature>
<feature type="binding site" evidence="1">
    <location>
        <position position="184"/>
    </location>
    <ligand>
        <name>3-phosphoshikimate</name>
        <dbReference type="ChEBI" id="CHEBI:145989"/>
    </ligand>
</feature>
<feature type="binding site" evidence="1">
    <location>
        <position position="185"/>
    </location>
    <ligand>
        <name>3-phosphoshikimate</name>
        <dbReference type="ChEBI" id="CHEBI:145989"/>
    </ligand>
</feature>
<feature type="binding site" evidence="1">
    <location>
        <position position="186"/>
    </location>
    <ligand>
        <name>3-phosphoshikimate</name>
        <dbReference type="ChEBI" id="CHEBI:145989"/>
    </ligand>
</feature>
<feature type="binding site" evidence="1">
    <location>
        <position position="186"/>
    </location>
    <ligand>
        <name>phosphoenolpyruvate</name>
        <dbReference type="ChEBI" id="CHEBI:58702"/>
    </ligand>
</feature>
<feature type="binding site" evidence="1">
    <location>
        <position position="329"/>
    </location>
    <ligand>
        <name>3-phosphoshikimate</name>
        <dbReference type="ChEBI" id="CHEBI:145989"/>
    </ligand>
</feature>
<feature type="binding site" evidence="1">
    <location>
        <position position="356"/>
    </location>
    <ligand>
        <name>3-phosphoshikimate</name>
        <dbReference type="ChEBI" id="CHEBI:145989"/>
    </ligand>
</feature>
<feature type="binding site" evidence="1">
    <location>
        <position position="360"/>
    </location>
    <ligand>
        <name>phosphoenolpyruvate</name>
        <dbReference type="ChEBI" id="CHEBI:58702"/>
    </ligand>
</feature>
<feature type="binding site" evidence="1">
    <location>
        <position position="403"/>
    </location>
    <ligand>
        <name>phosphoenolpyruvate</name>
        <dbReference type="ChEBI" id="CHEBI:58702"/>
    </ligand>
</feature>
<feature type="binding site" evidence="1">
    <location>
        <position position="428"/>
    </location>
    <ligand>
        <name>phosphoenolpyruvate</name>
        <dbReference type="ChEBI" id="CHEBI:58702"/>
    </ligand>
</feature>
<organism>
    <name type="scientific">Halalkalibacterium halodurans (strain ATCC BAA-125 / DSM 18197 / FERM 7344 / JCM 9153 / C-125)</name>
    <name type="common">Bacillus halodurans</name>
    <dbReference type="NCBI Taxonomy" id="272558"/>
    <lineage>
        <taxon>Bacteria</taxon>
        <taxon>Bacillati</taxon>
        <taxon>Bacillota</taxon>
        <taxon>Bacilli</taxon>
        <taxon>Bacillales</taxon>
        <taxon>Bacillaceae</taxon>
        <taxon>Halalkalibacterium (ex Joshi et al. 2022)</taxon>
    </lineage>
</organism>